<proteinExistence type="inferred from homology"/>
<protein>
    <recommendedName>
        <fullName evidence="1">7-cyano-7-deazaguanine synthase 2</fullName>
        <ecNumber evidence="1">6.3.4.20</ecNumber>
    </recommendedName>
    <alternativeName>
        <fullName evidence="1">7-cyano-7-carbaguanine synthase 2</fullName>
    </alternativeName>
    <alternativeName>
        <fullName evidence="1">PreQ(0) synthase 2</fullName>
    </alternativeName>
    <alternativeName>
        <fullName evidence="1">Queuosine biosynthesis protein QueC 2</fullName>
    </alternativeName>
</protein>
<name>QUEC2_PSEF5</name>
<sequence>MKKTAVIVFSGGQDSTTCLIHALPLYDEVHCITFDYGQRHHAEIETAQRLSKQLGATVHKVLDASLLNELAISSLTRDNIPVPTVNSSGESLPSTFVPGRNILFLTLASIYAYQVKAETVITGVCETDFSGYPDCRDEFVKALNKALELGMEYKLRLETPLMWLNKAETWALADYHNQLELVREQTLTCYNGIMGSGCANCDACNLRAKGLNAYLENKTQVMDSLKSKMGLK</sequence>
<accession>Q4K6M3</accession>
<feature type="chain" id="PRO_0000246886" description="7-cyano-7-deazaguanine synthase 2">
    <location>
        <begin position="1"/>
        <end position="232"/>
    </location>
</feature>
<feature type="binding site" evidence="1">
    <location>
        <begin position="9"/>
        <end position="19"/>
    </location>
    <ligand>
        <name>ATP</name>
        <dbReference type="ChEBI" id="CHEBI:30616"/>
    </ligand>
</feature>
<feature type="binding site" evidence="1">
    <location>
        <position position="189"/>
    </location>
    <ligand>
        <name>Zn(2+)</name>
        <dbReference type="ChEBI" id="CHEBI:29105"/>
    </ligand>
</feature>
<feature type="binding site" evidence="1">
    <location>
        <position position="198"/>
    </location>
    <ligand>
        <name>Zn(2+)</name>
        <dbReference type="ChEBI" id="CHEBI:29105"/>
    </ligand>
</feature>
<feature type="binding site" evidence="1">
    <location>
        <position position="201"/>
    </location>
    <ligand>
        <name>Zn(2+)</name>
        <dbReference type="ChEBI" id="CHEBI:29105"/>
    </ligand>
</feature>
<feature type="binding site" evidence="1">
    <location>
        <position position="204"/>
    </location>
    <ligand>
        <name>Zn(2+)</name>
        <dbReference type="ChEBI" id="CHEBI:29105"/>
    </ligand>
</feature>
<keyword id="KW-0067">ATP-binding</keyword>
<keyword id="KW-0436">Ligase</keyword>
<keyword id="KW-0479">Metal-binding</keyword>
<keyword id="KW-0547">Nucleotide-binding</keyword>
<keyword id="KW-0671">Queuosine biosynthesis</keyword>
<keyword id="KW-0862">Zinc</keyword>
<dbReference type="EC" id="6.3.4.20" evidence="1"/>
<dbReference type="EMBL" id="CP000076">
    <property type="protein sequence ID" value="AAY94259.1"/>
    <property type="molecule type" value="Genomic_DNA"/>
</dbReference>
<dbReference type="RefSeq" id="WP_011063281.1">
    <property type="nucleotide sequence ID" value="NC_004129.6"/>
</dbReference>
<dbReference type="SMR" id="Q4K6M3"/>
<dbReference type="STRING" id="220664.PFL_5031"/>
<dbReference type="GeneID" id="57478004"/>
<dbReference type="KEGG" id="pfl:PFL_5031"/>
<dbReference type="PATRIC" id="fig|220664.5.peg.5150"/>
<dbReference type="eggNOG" id="COG0603">
    <property type="taxonomic scope" value="Bacteria"/>
</dbReference>
<dbReference type="HOGENOM" id="CLU_081854_0_0_6"/>
<dbReference type="UniPathway" id="UPA00391"/>
<dbReference type="Proteomes" id="UP000008540">
    <property type="component" value="Chromosome"/>
</dbReference>
<dbReference type="GO" id="GO:0005524">
    <property type="term" value="F:ATP binding"/>
    <property type="evidence" value="ECO:0007669"/>
    <property type="project" value="UniProtKB-UniRule"/>
</dbReference>
<dbReference type="GO" id="GO:0016879">
    <property type="term" value="F:ligase activity, forming carbon-nitrogen bonds"/>
    <property type="evidence" value="ECO:0007669"/>
    <property type="project" value="UniProtKB-UniRule"/>
</dbReference>
<dbReference type="GO" id="GO:0008270">
    <property type="term" value="F:zinc ion binding"/>
    <property type="evidence" value="ECO:0007669"/>
    <property type="project" value="UniProtKB-UniRule"/>
</dbReference>
<dbReference type="GO" id="GO:0008616">
    <property type="term" value="P:queuosine biosynthetic process"/>
    <property type="evidence" value="ECO:0007669"/>
    <property type="project" value="UniProtKB-UniRule"/>
</dbReference>
<dbReference type="CDD" id="cd01995">
    <property type="entry name" value="QueC-like"/>
    <property type="match status" value="1"/>
</dbReference>
<dbReference type="FunFam" id="3.40.50.620:FF:000017">
    <property type="entry name" value="7-cyano-7-deazaguanine synthase"/>
    <property type="match status" value="1"/>
</dbReference>
<dbReference type="Gene3D" id="3.40.50.620">
    <property type="entry name" value="HUPs"/>
    <property type="match status" value="1"/>
</dbReference>
<dbReference type="HAMAP" id="MF_01633">
    <property type="entry name" value="QueC"/>
    <property type="match status" value="1"/>
</dbReference>
<dbReference type="InterPro" id="IPR018317">
    <property type="entry name" value="QueC"/>
</dbReference>
<dbReference type="InterPro" id="IPR014729">
    <property type="entry name" value="Rossmann-like_a/b/a_fold"/>
</dbReference>
<dbReference type="NCBIfam" id="TIGR00364">
    <property type="entry name" value="7-cyano-7-deazaguanine synthase QueC"/>
    <property type="match status" value="1"/>
</dbReference>
<dbReference type="NCBIfam" id="NF008317">
    <property type="entry name" value="PRK11106.1"/>
    <property type="match status" value="1"/>
</dbReference>
<dbReference type="PANTHER" id="PTHR42914">
    <property type="entry name" value="7-CYANO-7-DEAZAGUANINE SYNTHASE"/>
    <property type="match status" value="1"/>
</dbReference>
<dbReference type="PANTHER" id="PTHR42914:SF1">
    <property type="entry name" value="7-CYANO-7-DEAZAGUANINE SYNTHASE"/>
    <property type="match status" value="1"/>
</dbReference>
<dbReference type="Pfam" id="PF06508">
    <property type="entry name" value="QueC"/>
    <property type="match status" value="1"/>
</dbReference>
<dbReference type="PIRSF" id="PIRSF006293">
    <property type="entry name" value="ExsB"/>
    <property type="match status" value="1"/>
</dbReference>
<dbReference type="SUPFAM" id="SSF52402">
    <property type="entry name" value="Adenine nucleotide alpha hydrolases-like"/>
    <property type="match status" value="1"/>
</dbReference>
<reference key="1">
    <citation type="journal article" date="2005" name="Nat. Biotechnol.">
        <title>Complete genome sequence of the plant commensal Pseudomonas fluorescens Pf-5.</title>
        <authorList>
            <person name="Paulsen I.T."/>
            <person name="Press C.M."/>
            <person name="Ravel J."/>
            <person name="Kobayashi D.Y."/>
            <person name="Myers G.S.A."/>
            <person name="Mavrodi D.V."/>
            <person name="DeBoy R.T."/>
            <person name="Seshadri R."/>
            <person name="Ren Q."/>
            <person name="Madupu R."/>
            <person name="Dodson R.J."/>
            <person name="Durkin A.S."/>
            <person name="Brinkac L.M."/>
            <person name="Daugherty S.C."/>
            <person name="Sullivan S.A."/>
            <person name="Rosovitz M.J."/>
            <person name="Gwinn M.L."/>
            <person name="Zhou L."/>
            <person name="Schneider D.J."/>
            <person name="Cartinhour S.W."/>
            <person name="Nelson W.C."/>
            <person name="Weidman J."/>
            <person name="Watkins K."/>
            <person name="Tran K."/>
            <person name="Khouri H."/>
            <person name="Pierson E.A."/>
            <person name="Pierson L.S. III"/>
            <person name="Thomashow L.S."/>
            <person name="Loper J.E."/>
        </authorList>
    </citation>
    <scope>NUCLEOTIDE SEQUENCE [LARGE SCALE GENOMIC DNA]</scope>
    <source>
        <strain>ATCC BAA-477 / NRRL B-23932 / Pf-5</strain>
    </source>
</reference>
<organism>
    <name type="scientific">Pseudomonas fluorescens (strain ATCC BAA-477 / NRRL B-23932 / Pf-5)</name>
    <dbReference type="NCBI Taxonomy" id="220664"/>
    <lineage>
        <taxon>Bacteria</taxon>
        <taxon>Pseudomonadati</taxon>
        <taxon>Pseudomonadota</taxon>
        <taxon>Gammaproteobacteria</taxon>
        <taxon>Pseudomonadales</taxon>
        <taxon>Pseudomonadaceae</taxon>
        <taxon>Pseudomonas</taxon>
    </lineage>
</organism>
<comment type="function">
    <text evidence="1">Catalyzes the ATP-dependent conversion of 7-carboxy-7-deazaguanine (CDG) to 7-cyano-7-deazaguanine (preQ(0)).</text>
</comment>
<comment type="catalytic activity">
    <reaction evidence="1">
        <text>7-carboxy-7-deazaguanine + NH4(+) + ATP = 7-cyano-7-deazaguanine + ADP + phosphate + H2O + H(+)</text>
        <dbReference type="Rhea" id="RHEA:27982"/>
        <dbReference type="ChEBI" id="CHEBI:15377"/>
        <dbReference type="ChEBI" id="CHEBI:15378"/>
        <dbReference type="ChEBI" id="CHEBI:28938"/>
        <dbReference type="ChEBI" id="CHEBI:30616"/>
        <dbReference type="ChEBI" id="CHEBI:43474"/>
        <dbReference type="ChEBI" id="CHEBI:45075"/>
        <dbReference type="ChEBI" id="CHEBI:61036"/>
        <dbReference type="ChEBI" id="CHEBI:456216"/>
        <dbReference type="EC" id="6.3.4.20"/>
    </reaction>
</comment>
<comment type="cofactor">
    <cofactor evidence="1">
        <name>Zn(2+)</name>
        <dbReference type="ChEBI" id="CHEBI:29105"/>
    </cofactor>
    <text evidence="1">Binds 1 zinc ion per subunit.</text>
</comment>
<comment type="pathway">
    <text evidence="1">Purine metabolism; 7-cyano-7-deazaguanine biosynthesis.</text>
</comment>
<comment type="similarity">
    <text evidence="1">Belongs to the QueC family.</text>
</comment>
<evidence type="ECO:0000255" key="1">
    <source>
        <dbReference type="HAMAP-Rule" id="MF_01633"/>
    </source>
</evidence>
<gene>
    <name evidence="1" type="primary">queC2</name>
    <name type="ordered locus">PFL_5031</name>
</gene>